<protein>
    <recommendedName>
        <fullName>DNA-packaging protein FI</fullName>
    </recommendedName>
</protein>
<accession>P03709</accession>
<gene>
    <name type="primary">Fi</name>
    <name type="ordered locus">lambdap09</name>
</gene>
<proteinExistence type="evidence at protein level"/>
<evidence type="ECO:0000269" key="1">
    <source>
    </source>
</evidence>
<evidence type="ECO:0000269" key="2">
    <source>
    </source>
</evidence>
<evidence type="ECO:0000305" key="3"/>
<evidence type="ECO:0007829" key="4">
    <source>
        <dbReference type="PDB" id="2LSM"/>
    </source>
</evidence>
<comment type="function">
    <text evidence="2">Stimulates the interaction of procapsid with the terminase-DNA complex, thereby increasing the overall rate of DNA packaging. Before packaging, it likely coats the surface of the procapsid through binding mediated by C-terminal domain. FI presumably dissociates from the capsid once it inflates upon DNA packaging, and is not present in the mature virion.</text>
</comment>
<comment type="subunit">
    <text evidence="1">Interacts with major capsid protein via c-terminus.</text>
</comment>
<comment type="subcellular location">
    <subcellularLocation>
        <location evidence="3">Host cytoplasm</location>
    </subcellularLocation>
</comment>
<name>FI_LAMBD</name>
<sequence length="132" mass="14308">MTKDELIARLRSLGEQLNRDVSLTGTKEELALRVAELKEELDDTDETAGQDTPLSRENVLTGHENEVGSAQPDTVILDTSELVTVVALVKLHTDALHATRDEPVAFVLPGTAFRVSAGVAAEMTERGLARMQ</sequence>
<reference key="1">
    <citation type="journal article" date="1982" name="J. Mol. Biol.">
        <title>Nucleotide sequence of bacteriophage lambda DNA.</title>
        <authorList>
            <person name="Sanger F."/>
            <person name="Coulson A.R."/>
            <person name="Hong G.F."/>
            <person name="Hill D.F."/>
            <person name="Petersen G.B."/>
        </authorList>
    </citation>
    <scope>NUCLEOTIDE SEQUENCE [LARGE SCALE GENOMIC DNA]</scope>
</reference>
<reference key="2">
    <citation type="journal article" date="1997" name="Mol. Microbiol.">
        <title>Mutations in the terminase genes of bacteriophage lambda that bypass the necessity for FI.</title>
        <authorList>
            <person name="Murialdo H."/>
            <person name="Tzamtzis D."/>
            <person name="Berru M."/>
            <person name="Fife W.L."/>
            <person name="Becker A."/>
        </authorList>
    </citation>
    <scope>FUNCTION</scope>
</reference>
<reference key="3">
    <citation type="journal article" date="2012" name="J. Biol. Chem.">
        <title>Structural and biochemical characterization of phage lambda FI protein (gpFI) reveals a novel mechanism of DNA packaging chaperone activity.</title>
        <authorList>
            <person name="Popovic A."/>
            <person name="Wu B."/>
            <person name="Arrowsmith C.H."/>
            <person name="Edwards A.M."/>
            <person name="Davidson A.R."/>
            <person name="Maxwell K.L."/>
        </authorList>
    </citation>
    <scope>STRUCTURE BY NMR OF 72-132</scope>
    <scope>INTERACTION WITH MAJOR CAPSID PROTEIN</scope>
    <scope>MUTAGENESIS OF HIS-92 AND PHE-106</scope>
</reference>
<organismHost>
    <name type="scientific">Escherichia coli</name>
    <dbReference type="NCBI Taxonomy" id="562"/>
</organismHost>
<organism>
    <name type="scientific">Escherichia phage lambda</name>
    <name type="common">Bacteriophage lambda</name>
    <dbReference type="NCBI Taxonomy" id="2681611"/>
    <lineage>
        <taxon>Viruses</taxon>
        <taxon>Duplodnaviria</taxon>
        <taxon>Heunggongvirae</taxon>
        <taxon>Uroviricota</taxon>
        <taxon>Caudoviricetes</taxon>
        <taxon>Lambdavirus</taxon>
        <taxon>Lambdavirus lambda</taxon>
    </lineage>
</organism>
<dbReference type="EMBL" id="J02459">
    <property type="protein sequence ID" value="AAA96541.1"/>
    <property type="molecule type" value="Genomic_DNA"/>
</dbReference>
<dbReference type="PIR" id="E04333">
    <property type="entry name" value="JVBPFL"/>
</dbReference>
<dbReference type="RefSeq" id="NP_040588.1">
    <property type="nucleotide sequence ID" value="NC_001416.1"/>
</dbReference>
<dbReference type="PDB" id="2LSM">
    <property type="method" value="NMR"/>
    <property type="chains" value="A=72-132"/>
</dbReference>
<dbReference type="PDBsum" id="2LSM"/>
<dbReference type="BMRB" id="P03709"/>
<dbReference type="SMR" id="P03709"/>
<dbReference type="IntAct" id="P03709">
    <property type="interactions" value="4"/>
</dbReference>
<dbReference type="GeneID" id="2703483"/>
<dbReference type="KEGG" id="vg:2703483"/>
<dbReference type="EvolutionaryTrace" id="P03709"/>
<dbReference type="Proteomes" id="UP000001711">
    <property type="component" value="Genome"/>
</dbReference>
<dbReference type="GO" id="GO:0030430">
    <property type="term" value="C:host cell cytoplasm"/>
    <property type="evidence" value="ECO:0007669"/>
    <property type="project" value="UniProtKB-SubCell"/>
</dbReference>
<dbReference type="GO" id="GO:0019072">
    <property type="term" value="P:viral genome packaging"/>
    <property type="evidence" value="ECO:0000314"/>
    <property type="project" value="UniProtKB"/>
</dbReference>
<dbReference type="DisProt" id="DP01336"/>
<dbReference type="FunFam" id="3.40.5.70:FF:000001">
    <property type="entry name" value="DNA-packaging protein FI"/>
    <property type="match status" value="1"/>
</dbReference>
<dbReference type="Gene3D" id="3.40.5.70">
    <property type="entry name" value="DNA packaging chaperone protein FI, C-terminal beta-strand domain"/>
    <property type="match status" value="1"/>
</dbReference>
<dbReference type="InterPro" id="IPR025147">
    <property type="entry name" value="Packaging_FI"/>
</dbReference>
<dbReference type="InterPro" id="IPR043043">
    <property type="entry name" value="Packaging_FI_C"/>
</dbReference>
<dbReference type="Pfam" id="PF14000">
    <property type="entry name" value="Packaging_FI"/>
    <property type="match status" value="1"/>
</dbReference>
<keyword id="KW-0002">3D-structure</keyword>
<keyword id="KW-1035">Host cytoplasm</keyword>
<keyword id="KW-1185">Reference proteome</keyword>
<keyword id="KW-0231">Viral genome packaging</keyword>
<keyword id="KW-1188">Viral release from host cell</keyword>
<feature type="chain" id="PRO_0000077685" description="DNA-packaging protein FI">
    <location>
        <begin position="1"/>
        <end position="132"/>
    </location>
</feature>
<feature type="region of interest" description="Capsid binding">
    <location>
        <begin position="81"/>
        <end position="132"/>
    </location>
</feature>
<feature type="mutagenesis site" description="Complete loss of capsid protein binding." evidence="1">
    <original>H</original>
    <variation>A</variation>
    <location>
        <position position="92"/>
    </location>
</feature>
<feature type="mutagenesis site" description="Partial loss of capsid protein binding." evidence="1">
    <original>F</original>
    <variation>A</variation>
    <location>
        <position position="106"/>
    </location>
</feature>
<feature type="strand" evidence="4">
    <location>
        <begin position="83"/>
        <end position="89"/>
    </location>
</feature>
<feature type="strand" evidence="4">
    <location>
        <begin position="98"/>
        <end position="101"/>
    </location>
</feature>
<feature type="strand" evidence="4">
    <location>
        <begin position="103"/>
        <end position="105"/>
    </location>
</feature>
<feature type="strand" evidence="4">
    <location>
        <begin position="112"/>
        <end position="115"/>
    </location>
</feature>
<feature type="helix" evidence="4">
    <location>
        <begin position="117"/>
        <end position="125"/>
    </location>
</feature>
<feature type="strand" evidence="4">
    <location>
        <begin position="128"/>
        <end position="131"/>
    </location>
</feature>